<accession>Q31TW1</accession>
<reference key="1">
    <citation type="journal article" date="2005" name="Nucleic Acids Res.">
        <title>Genome dynamics and diversity of Shigella species, the etiologic agents of bacillary dysentery.</title>
        <authorList>
            <person name="Yang F."/>
            <person name="Yang J."/>
            <person name="Zhang X."/>
            <person name="Chen L."/>
            <person name="Jiang Y."/>
            <person name="Yan Y."/>
            <person name="Tang X."/>
            <person name="Wang J."/>
            <person name="Xiong Z."/>
            <person name="Dong J."/>
            <person name="Xue Y."/>
            <person name="Zhu Y."/>
            <person name="Xu X."/>
            <person name="Sun L."/>
            <person name="Chen S."/>
            <person name="Nie H."/>
            <person name="Peng J."/>
            <person name="Xu J."/>
            <person name="Wang Y."/>
            <person name="Yuan Z."/>
            <person name="Wen Y."/>
            <person name="Yao Z."/>
            <person name="Shen Y."/>
            <person name="Qiang B."/>
            <person name="Hou Y."/>
            <person name="Yu J."/>
            <person name="Jin Q."/>
        </authorList>
    </citation>
    <scope>NUCLEOTIDE SEQUENCE [LARGE SCALE GENOMIC DNA]</scope>
    <source>
        <strain>Sb227</strain>
    </source>
</reference>
<sequence>MQAATVVINRRALRHNLQRLRELAPASKMVAVVKANAYGHGLLETARTLPDADAFGVARLEEALRLRAGGITKPVLLLEGFFDARDLPTISAQHFHTAVHNEEQLAALEEASLDEPVTVWMKLDTGMHRLGVRPEQAGAFYHRLTQCKNVRQPVNIVSHFARADEPKCGATEKQLAIFNTFCEGKPGQRSIAASGGILLWPQSHFDWVRPGIILYGVSPLEDRSTGADFGCQPVMSLTSSLIAVREHKAGEPVGYGGTWVSERDTRLGVVAMGYGDGYPRAAPSGTPVLVNGREVPIVGRVAMDMICVDLGPQAQDKAGDPVILWGEGLPVERIAEMTKVSAYELITRLTSRVAMKYVD</sequence>
<name>ALR_SHIBS</name>
<comment type="function">
    <text evidence="1">Catalyzes the interconversion of L-alanine and D-alanine. May also act on other amino acids.</text>
</comment>
<comment type="catalytic activity">
    <reaction evidence="1">
        <text>L-alanine = D-alanine</text>
        <dbReference type="Rhea" id="RHEA:20249"/>
        <dbReference type="ChEBI" id="CHEBI:57416"/>
        <dbReference type="ChEBI" id="CHEBI:57972"/>
        <dbReference type="EC" id="5.1.1.1"/>
    </reaction>
</comment>
<comment type="cofactor">
    <cofactor evidence="1">
        <name>pyridoxal 5'-phosphate</name>
        <dbReference type="ChEBI" id="CHEBI:597326"/>
    </cofactor>
</comment>
<comment type="pathway">
    <text evidence="1">Amino-acid biosynthesis; D-alanine biosynthesis; D-alanine from L-alanine: step 1/1.</text>
</comment>
<comment type="similarity">
    <text evidence="1">Belongs to the alanine racemase family.</text>
</comment>
<organism>
    <name type="scientific">Shigella boydii serotype 4 (strain Sb227)</name>
    <dbReference type="NCBI Taxonomy" id="300268"/>
    <lineage>
        <taxon>Bacteria</taxon>
        <taxon>Pseudomonadati</taxon>
        <taxon>Pseudomonadota</taxon>
        <taxon>Gammaproteobacteria</taxon>
        <taxon>Enterobacterales</taxon>
        <taxon>Enterobacteriaceae</taxon>
        <taxon>Shigella</taxon>
    </lineage>
</organism>
<feature type="chain" id="PRO_1000066037" description="Alanine racemase">
    <location>
        <begin position="1"/>
        <end position="359"/>
    </location>
</feature>
<feature type="active site" description="Proton acceptor; specific for D-alanine" evidence="1">
    <location>
        <position position="34"/>
    </location>
</feature>
<feature type="active site" description="Proton acceptor; specific for L-alanine" evidence="1">
    <location>
        <position position="255"/>
    </location>
</feature>
<feature type="binding site" evidence="1">
    <location>
        <position position="129"/>
    </location>
    <ligand>
        <name>substrate</name>
    </ligand>
</feature>
<feature type="binding site" evidence="1">
    <location>
        <position position="303"/>
    </location>
    <ligand>
        <name>substrate</name>
    </ligand>
</feature>
<feature type="modified residue" description="N6-(pyridoxal phosphate)lysine" evidence="1">
    <location>
        <position position="34"/>
    </location>
</feature>
<gene>
    <name type="primary">alr</name>
    <name type="ordered locus">SBO_4064</name>
</gene>
<dbReference type="EC" id="5.1.1.1" evidence="1"/>
<dbReference type="EMBL" id="CP000036">
    <property type="protein sequence ID" value="ABB68497.1"/>
    <property type="molecule type" value="Genomic_DNA"/>
</dbReference>
<dbReference type="RefSeq" id="WP_001147344.1">
    <property type="nucleotide sequence ID" value="NC_007613.1"/>
</dbReference>
<dbReference type="SMR" id="Q31TW1"/>
<dbReference type="KEGG" id="sbo:SBO_4064"/>
<dbReference type="HOGENOM" id="CLU_028393_1_0_6"/>
<dbReference type="UniPathway" id="UPA00042">
    <property type="reaction ID" value="UER00497"/>
</dbReference>
<dbReference type="Proteomes" id="UP000007067">
    <property type="component" value="Chromosome"/>
</dbReference>
<dbReference type="GO" id="GO:0005829">
    <property type="term" value="C:cytosol"/>
    <property type="evidence" value="ECO:0007669"/>
    <property type="project" value="TreeGrafter"/>
</dbReference>
<dbReference type="GO" id="GO:0008784">
    <property type="term" value="F:alanine racemase activity"/>
    <property type="evidence" value="ECO:0007669"/>
    <property type="project" value="UniProtKB-UniRule"/>
</dbReference>
<dbReference type="GO" id="GO:0030170">
    <property type="term" value="F:pyridoxal phosphate binding"/>
    <property type="evidence" value="ECO:0007669"/>
    <property type="project" value="UniProtKB-UniRule"/>
</dbReference>
<dbReference type="GO" id="GO:0030632">
    <property type="term" value="P:D-alanine biosynthetic process"/>
    <property type="evidence" value="ECO:0007669"/>
    <property type="project" value="UniProtKB-UniRule"/>
</dbReference>
<dbReference type="CDD" id="cd06827">
    <property type="entry name" value="PLPDE_III_AR_proteobact"/>
    <property type="match status" value="1"/>
</dbReference>
<dbReference type="FunFam" id="2.40.37.10:FF:000002">
    <property type="entry name" value="Alanine racemase"/>
    <property type="match status" value="1"/>
</dbReference>
<dbReference type="FunFam" id="3.20.20.10:FF:000002">
    <property type="entry name" value="Alanine racemase"/>
    <property type="match status" value="1"/>
</dbReference>
<dbReference type="Gene3D" id="3.20.20.10">
    <property type="entry name" value="Alanine racemase"/>
    <property type="match status" value="1"/>
</dbReference>
<dbReference type="Gene3D" id="2.40.37.10">
    <property type="entry name" value="Lyase, Ornithine Decarboxylase, Chain A, domain 1"/>
    <property type="match status" value="1"/>
</dbReference>
<dbReference type="HAMAP" id="MF_01201">
    <property type="entry name" value="Ala_racemase"/>
    <property type="match status" value="1"/>
</dbReference>
<dbReference type="InterPro" id="IPR000821">
    <property type="entry name" value="Ala_racemase"/>
</dbReference>
<dbReference type="InterPro" id="IPR009006">
    <property type="entry name" value="Ala_racemase/Decarboxylase_C"/>
</dbReference>
<dbReference type="InterPro" id="IPR011079">
    <property type="entry name" value="Ala_racemase_C"/>
</dbReference>
<dbReference type="InterPro" id="IPR001608">
    <property type="entry name" value="Ala_racemase_N"/>
</dbReference>
<dbReference type="InterPro" id="IPR020622">
    <property type="entry name" value="Ala_racemase_pyridoxalP-BS"/>
</dbReference>
<dbReference type="InterPro" id="IPR029066">
    <property type="entry name" value="PLP-binding_barrel"/>
</dbReference>
<dbReference type="NCBIfam" id="TIGR00492">
    <property type="entry name" value="alr"/>
    <property type="match status" value="1"/>
</dbReference>
<dbReference type="PANTHER" id="PTHR30511">
    <property type="entry name" value="ALANINE RACEMASE"/>
    <property type="match status" value="1"/>
</dbReference>
<dbReference type="PANTHER" id="PTHR30511:SF4">
    <property type="entry name" value="ALANINE RACEMASE, BIOSYNTHETIC"/>
    <property type="match status" value="1"/>
</dbReference>
<dbReference type="Pfam" id="PF00842">
    <property type="entry name" value="Ala_racemase_C"/>
    <property type="match status" value="1"/>
</dbReference>
<dbReference type="Pfam" id="PF01168">
    <property type="entry name" value="Ala_racemase_N"/>
    <property type="match status" value="1"/>
</dbReference>
<dbReference type="PRINTS" id="PR00992">
    <property type="entry name" value="ALARACEMASE"/>
</dbReference>
<dbReference type="SMART" id="SM01005">
    <property type="entry name" value="Ala_racemase_C"/>
    <property type="match status" value="1"/>
</dbReference>
<dbReference type="SUPFAM" id="SSF50621">
    <property type="entry name" value="Alanine racemase C-terminal domain-like"/>
    <property type="match status" value="1"/>
</dbReference>
<dbReference type="SUPFAM" id="SSF51419">
    <property type="entry name" value="PLP-binding barrel"/>
    <property type="match status" value="1"/>
</dbReference>
<dbReference type="PROSITE" id="PS00395">
    <property type="entry name" value="ALANINE_RACEMASE"/>
    <property type="match status" value="1"/>
</dbReference>
<keyword id="KW-0413">Isomerase</keyword>
<keyword id="KW-0663">Pyridoxal phosphate</keyword>
<evidence type="ECO:0000255" key="1">
    <source>
        <dbReference type="HAMAP-Rule" id="MF_01201"/>
    </source>
</evidence>
<proteinExistence type="inferred from homology"/>
<protein>
    <recommendedName>
        <fullName evidence="1">Alanine racemase</fullName>
        <ecNumber evidence="1">5.1.1.1</ecNumber>
    </recommendedName>
</protein>